<sequence>MVEDHKHEESILEKIVEKIHGHGDSSSLSDSDDDKKSTSSSSSSFKSKIYRLFGREKPVHKVLGGGKPADIFLWRNKKVSGGVLGAVTASWVLFELFEYHLLAFLCHFAIFALAALFLWSNACTFIHKSTPHIPEVHIPEDPILQLVSGLRIEINRGLTLLRNIASGKDVKKFILVIAGLWVLSIIGSCYNFLTLFYTATVLLFTIPVLYEKYEDKVDAYGEKAMREIKKQYAVLDEKVLRKVISKIPRGALNKKKD</sequence>
<keyword id="KW-0256">Endoplasmic reticulum</keyword>
<keyword id="KW-0472">Membrane</keyword>
<keyword id="KW-1185">Reference proteome</keyword>
<keyword id="KW-0812">Transmembrane</keyword>
<keyword id="KW-1133">Transmembrane helix</keyword>
<feature type="chain" id="PRO_0000371285" description="Reticulon-like protein B4">
    <location>
        <begin position="1"/>
        <end position="257"/>
    </location>
</feature>
<feature type="transmembrane region" description="Helical" evidence="1">
    <location>
        <begin position="78"/>
        <end position="98"/>
    </location>
</feature>
<feature type="transmembrane region" description="Helical" evidence="1">
    <location>
        <begin position="99"/>
        <end position="119"/>
    </location>
</feature>
<feature type="transmembrane region" description="Helical" evidence="1">
    <location>
        <begin position="173"/>
        <end position="193"/>
    </location>
</feature>
<feature type="domain" description="Reticulon" evidence="2">
    <location>
        <begin position="68"/>
        <end position="257"/>
    </location>
</feature>
<feature type="region of interest" description="Disordered" evidence="3">
    <location>
        <begin position="19"/>
        <end position="42"/>
    </location>
</feature>
<organism>
    <name type="scientific">Arabidopsis thaliana</name>
    <name type="common">Mouse-ear cress</name>
    <dbReference type="NCBI Taxonomy" id="3702"/>
    <lineage>
        <taxon>Eukaryota</taxon>
        <taxon>Viridiplantae</taxon>
        <taxon>Streptophyta</taxon>
        <taxon>Embryophyta</taxon>
        <taxon>Tracheophyta</taxon>
        <taxon>Spermatophyta</taxon>
        <taxon>Magnoliopsida</taxon>
        <taxon>eudicotyledons</taxon>
        <taxon>Gunneridae</taxon>
        <taxon>Pentapetalae</taxon>
        <taxon>rosids</taxon>
        <taxon>malvids</taxon>
        <taxon>Brassicales</taxon>
        <taxon>Brassicaceae</taxon>
        <taxon>Camelineae</taxon>
        <taxon>Arabidopsis</taxon>
    </lineage>
</organism>
<evidence type="ECO:0000255" key="1"/>
<evidence type="ECO:0000255" key="2">
    <source>
        <dbReference type="PROSITE-ProRule" id="PRU00170"/>
    </source>
</evidence>
<evidence type="ECO:0000256" key="3">
    <source>
        <dbReference type="SAM" id="MobiDB-lite"/>
    </source>
</evidence>
<evidence type="ECO:0000269" key="4">
    <source>
    </source>
</evidence>
<evidence type="ECO:0000269" key="5">
    <source>
    </source>
</evidence>
<accession>Q9FFS0</accession>
<comment type="function">
    <text evidence="4">Plays a role in the Agrobacterium-mediated plant transformation via its interaction with VirB2, the major component of the T-pilus.</text>
</comment>
<comment type="subunit">
    <text evidence="4">Interacts with VirB2.</text>
</comment>
<comment type="subcellular location">
    <subcellularLocation>
        <location evidence="5">Endoplasmic reticulum membrane</location>
        <topology evidence="5">Multi-pass membrane protein</topology>
    </subcellularLocation>
</comment>
<proteinExistence type="evidence at protein level"/>
<name>RTNLD_ARATH</name>
<reference key="1">
    <citation type="journal article" date="1997" name="DNA Res.">
        <title>Structural analysis of Arabidopsis thaliana chromosome 5. I. Sequence features of the 1.6 Mb regions covered by twenty physically assigned P1 clones.</title>
        <authorList>
            <person name="Sato S."/>
            <person name="Kotani H."/>
            <person name="Nakamura Y."/>
            <person name="Kaneko T."/>
            <person name="Asamizu E."/>
            <person name="Fukami M."/>
            <person name="Miyajima N."/>
            <person name="Tabata S."/>
        </authorList>
    </citation>
    <scope>NUCLEOTIDE SEQUENCE [LARGE SCALE GENOMIC DNA]</scope>
    <source>
        <strain>cv. Columbia</strain>
    </source>
</reference>
<reference key="2">
    <citation type="journal article" date="2017" name="Plant J.">
        <title>Araport11: a complete reannotation of the Arabidopsis thaliana reference genome.</title>
        <authorList>
            <person name="Cheng C.Y."/>
            <person name="Krishnakumar V."/>
            <person name="Chan A.P."/>
            <person name="Thibaud-Nissen F."/>
            <person name="Schobel S."/>
            <person name="Town C.D."/>
        </authorList>
    </citation>
    <scope>GENOME REANNOTATION</scope>
    <source>
        <strain>cv. Columbia</strain>
    </source>
</reference>
<reference key="3">
    <citation type="journal article" date="2003" name="Science">
        <title>Empirical analysis of transcriptional activity in the Arabidopsis genome.</title>
        <authorList>
            <person name="Yamada K."/>
            <person name="Lim J."/>
            <person name="Dale J.M."/>
            <person name="Chen H."/>
            <person name="Shinn P."/>
            <person name="Palm C.J."/>
            <person name="Southwick A.M."/>
            <person name="Wu H.C."/>
            <person name="Kim C.J."/>
            <person name="Nguyen M."/>
            <person name="Pham P.K."/>
            <person name="Cheuk R.F."/>
            <person name="Karlin-Newmann G."/>
            <person name="Liu S.X."/>
            <person name="Lam B."/>
            <person name="Sakano H."/>
            <person name="Wu T."/>
            <person name="Yu G."/>
            <person name="Miranda M."/>
            <person name="Quach H.L."/>
            <person name="Tripp M."/>
            <person name="Chang C.H."/>
            <person name="Lee J.M."/>
            <person name="Toriumi M.J."/>
            <person name="Chan M.M."/>
            <person name="Tang C.C."/>
            <person name="Onodera C.S."/>
            <person name="Deng J.M."/>
            <person name="Akiyama K."/>
            <person name="Ansari Y."/>
            <person name="Arakawa T."/>
            <person name="Banh J."/>
            <person name="Banno F."/>
            <person name="Bowser L."/>
            <person name="Brooks S.Y."/>
            <person name="Carninci P."/>
            <person name="Chao Q."/>
            <person name="Choy N."/>
            <person name="Enju A."/>
            <person name="Goldsmith A.D."/>
            <person name="Gurjal M."/>
            <person name="Hansen N.F."/>
            <person name="Hayashizaki Y."/>
            <person name="Johnson-Hopson C."/>
            <person name="Hsuan V.W."/>
            <person name="Iida K."/>
            <person name="Karnes M."/>
            <person name="Khan S."/>
            <person name="Koesema E."/>
            <person name="Ishida J."/>
            <person name="Jiang P.X."/>
            <person name="Jones T."/>
            <person name="Kawai J."/>
            <person name="Kamiya A."/>
            <person name="Meyers C."/>
            <person name="Nakajima M."/>
            <person name="Narusaka M."/>
            <person name="Seki M."/>
            <person name="Sakurai T."/>
            <person name="Satou M."/>
            <person name="Tamse R."/>
            <person name="Vaysberg M."/>
            <person name="Wallender E.K."/>
            <person name="Wong C."/>
            <person name="Yamamura Y."/>
            <person name="Yuan S."/>
            <person name="Shinozaki K."/>
            <person name="Davis R.W."/>
            <person name="Theologis A."/>
            <person name="Ecker J.R."/>
        </authorList>
    </citation>
    <scope>NUCLEOTIDE SEQUENCE [LARGE SCALE MRNA]</scope>
    <source>
        <strain>cv. Columbia</strain>
    </source>
</reference>
<reference key="4">
    <citation type="journal article" date="2003" name="Mol. Cell. Proteomics">
        <title>Large-scale analysis of in vivo phosphorylated membrane proteins by immobilized metal ion affinity chromatography and mass spectrometry.</title>
        <authorList>
            <person name="Nuehse T.S."/>
            <person name="Stensballe A."/>
            <person name="Jensen O.N."/>
            <person name="Peck S.C."/>
        </authorList>
    </citation>
    <scope>IDENTIFICATION BY MASS SPECTROMETRY [LARGE SCALE ANALYSIS]</scope>
    <source>
        <strain>cv. La-0</strain>
    </source>
</reference>
<reference key="5">
    <citation type="journal article" date="2004" name="Plant Cell">
        <title>Phosphoproteomics of the Arabidopsis plasma membrane and a new phosphorylation site database.</title>
        <authorList>
            <person name="Nuehse T.S."/>
            <person name="Stensballe A."/>
            <person name="Jensen O.N."/>
            <person name="Peck S.C."/>
        </authorList>
    </citation>
    <scope>IDENTIFICATION BY MASS SPECTROMETRY [LARGE SCALE ANALYSIS]</scope>
</reference>
<reference key="6">
    <citation type="journal article" date="2004" name="Plant Cell">
        <title>Plant proteins that interact with VirB2, the Agrobacterium tumefaciens pilin protein, mediate plant transformation.</title>
        <authorList>
            <person name="Hwang H.-H."/>
            <person name="Gelvin S.B."/>
        </authorList>
    </citation>
    <scope>FUNCTION</scope>
    <scope>INTERACTION WITH VIRB2</scope>
</reference>
<reference key="7">
    <citation type="journal article" date="2007" name="FEBS Lett.">
        <title>Reticulon-like proteins in Arabidopsis thaliana: structural organization and ER localization.</title>
        <authorList>
            <person name="Nziengui H."/>
            <person name="Bouhidel K."/>
            <person name="Pillon D."/>
            <person name="Der C."/>
            <person name="Marty F."/>
            <person name="Schoefs B."/>
        </authorList>
    </citation>
    <scope>GENE FAMILY</scope>
    <scope>NOMENCLATURE</scope>
    <scope>SUBCELLULAR LOCATION</scope>
</reference>
<protein>
    <recommendedName>
        <fullName>Reticulon-like protein B4</fullName>
        <shortName>AtRTNLB4</shortName>
    </recommendedName>
    <alternativeName>
        <fullName>VirB2-interacting protein 3</fullName>
    </alternativeName>
</protein>
<dbReference type="EMBL" id="AB005233">
    <property type="protein sequence ID" value="BAB11466.1"/>
    <property type="molecule type" value="Genomic_DNA"/>
</dbReference>
<dbReference type="EMBL" id="CP002688">
    <property type="protein sequence ID" value="AED94696.1"/>
    <property type="molecule type" value="Genomic_DNA"/>
</dbReference>
<dbReference type="EMBL" id="AY035169">
    <property type="protein sequence ID" value="AAK59673.1"/>
    <property type="molecule type" value="mRNA"/>
</dbReference>
<dbReference type="EMBL" id="AY057638">
    <property type="protein sequence ID" value="AAL15269.1"/>
    <property type="molecule type" value="mRNA"/>
</dbReference>
<dbReference type="EMBL" id="AY150449">
    <property type="protein sequence ID" value="AAN12890.1"/>
    <property type="molecule type" value="mRNA"/>
</dbReference>
<dbReference type="RefSeq" id="NP_198975.1">
    <property type="nucleotide sequence ID" value="NM_123524.4"/>
</dbReference>
<dbReference type="SMR" id="Q9FFS0"/>
<dbReference type="BioGRID" id="19413">
    <property type="interactions" value="29"/>
</dbReference>
<dbReference type="FunCoup" id="Q9FFS0">
    <property type="interactions" value="839"/>
</dbReference>
<dbReference type="IntAct" id="Q9FFS0">
    <property type="interactions" value="38"/>
</dbReference>
<dbReference type="STRING" id="3702.Q9FFS0"/>
<dbReference type="iPTMnet" id="Q9FFS0"/>
<dbReference type="PaxDb" id="3702-AT5G41600.1"/>
<dbReference type="ProteomicsDB" id="228051"/>
<dbReference type="EnsemblPlants" id="AT5G41600.1">
    <property type="protein sequence ID" value="AT5G41600.1"/>
    <property type="gene ID" value="AT5G41600"/>
</dbReference>
<dbReference type="GeneID" id="834162"/>
<dbReference type="Gramene" id="AT5G41600.1">
    <property type="protein sequence ID" value="AT5G41600.1"/>
    <property type="gene ID" value="AT5G41600"/>
</dbReference>
<dbReference type="KEGG" id="ath:AT5G41600"/>
<dbReference type="Araport" id="AT5G41600"/>
<dbReference type="TAIR" id="AT5G41600">
    <property type="gene designation" value="BTI3"/>
</dbReference>
<dbReference type="eggNOG" id="KOG1792">
    <property type="taxonomic scope" value="Eukaryota"/>
</dbReference>
<dbReference type="HOGENOM" id="CLU_066344_1_0_1"/>
<dbReference type="InParanoid" id="Q9FFS0"/>
<dbReference type="OMA" id="DHKHEES"/>
<dbReference type="OrthoDB" id="567788at2759"/>
<dbReference type="PhylomeDB" id="Q9FFS0"/>
<dbReference type="PRO" id="PR:Q9FFS0"/>
<dbReference type="Proteomes" id="UP000006548">
    <property type="component" value="Chromosome 5"/>
</dbReference>
<dbReference type="ExpressionAtlas" id="Q9FFS0">
    <property type="expression patterns" value="baseline and differential"/>
</dbReference>
<dbReference type="GO" id="GO:0098554">
    <property type="term" value="C:cytoplasmic side of endoplasmic reticulum membrane"/>
    <property type="evidence" value="ECO:0000314"/>
    <property type="project" value="UniProtKB"/>
</dbReference>
<dbReference type="GO" id="GO:0005783">
    <property type="term" value="C:endoplasmic reticulum"/>
    <property type="evidence" value="ECO:0007005"/>
    <property type="project" value="TAIR"/>
</dbReference>
<dbReference type="GO" id="GO:0005789">
    <property type="term" value="C:endoplasmic reticulum membrane"/>
    <property type="evidence" value="ECO:0000314"/>
    <property type="project" value="TAIR"/>
</dbReference>
<dbReference type="GO" id="GO:0071782">
    <property type="term" value="C:endoplasmic reticulum tubular network"/>
    <property type="evidence" value="ECO:0000314"/>
    <property type="project" value="UniProtKB"/>
</dbReference>
<dbReference type="GO" id="GO:0005886">
    <property type="term" value="C:plasma membrane"/>
    <property type="evidence" value="ECO:0007005"/>
    <property type="project" value="TAIR"/>
</dbReference>
<dbReference type="GO" id="GO:0009506">
    <property type="term" value="C:plasmodesma"/>
    <property type="evidence" value="ECO:0007005"/>
    <property type="project" value="TAIR"/>
</dbReference>
<dbReference type="GO" id="GO:0071786">
    <property type="term" value="P:endoplasmic reticulum tubular network organization"/>
    <property type="evidence" value="ECO:0000315"/>
    <property type="project" value="UniProtKB"/>
</dbReference>
<dbReference type="GO" id="GO:0009617">
    <property type="term" value="P:response to bacterium"/>
    <property type="evidence" value="ECO:0007669"/>
    <property type="project" value="InterPro"/>
</dbReference>
<dbReference type="InterPro" id="IPR003388">
    <property type="entry name" value="Reticulon"/>
</dbReference>
<dbReference type="InterPro" id="IPR045064">
    <property type="entry name" value="Reticulon-like"/>
</dbReference>
<dbReference type="PANTHER" id="PTHR10994">
    <property type="entry name" value="RETICULON"/>
    <property type="match status" value="1"/>
</dbReference>
<dbReference type="PANTHER" id="PTHR10994:SF193">
    <property type="entry name" value="RETICULON-LIKE PROTEIN"/>
    <property type="match status" value="1"/>
</dbReference>
<dbReference type="Pfam" id="PF02453">
    <property type="entry name" value="Reticulon"/>
    <property type="match status" value="1"/>
</dbReference>
<dbReference type="PROSITE" id="PS50845">
    <property type="entry name" value="RETICULON"/>
    <property type="match status" value="1"/>
</dbReference>
<gene>
    <name type="primary">RTNLB4</name>
    <name type="synonym">BTI3</name>
    <name type="ordered locus">At5g41600</name>
    <name type="ORF">MBK23.13</name>
</gene>